<geneLocation type="chloroplast"/>
<reference key="1">
    <citation type="submission" date="1998-02" db="EMBL/GenBank/DDBJ databases">
        <title>Chloroplast rpl23 gene cluster of Spirogyra maxima (Charophyceae), shared by land plants.</title>
        <authorList>
            <person name="Lee J."/>
            <person name="Manhart J.R."/>
        </authorList>
    </citation>
    <scope>NUCLEOTIDE SEQUENCE [GENOMIC DNA]</scope>
    <source>
        <strain>UTEX LB 2495</strain>
    </source>
</reference>
<organism>
    <name type="scientific">Spirogyra maxima</name>
    <name type="common">Green alga</name>
    <dbReference type="NCBI Taxonomy" id="3180"/>
    <lineage>
        <taxon>Eukaryota</taxon>
        <taxon>Viridiplantae</taxon>
        <taxon>Streptophyta</taxon>
        <taxon>Zygnematophyceae</taxon>
        <taxon>Zygnematophycidae</taxon>
        <taxon>Zygnematales</taxon>
        <taxon>Zygnemataceae</taxon>
        <taxon>Spirogyra</taxon>
    </lineage>
</organism>
<evidence type="ECO:0000255" key="1">
    <source>
        <dbReference type="HAMAP-Rule" id="MF_01342"/>
    </source>
</evidence>
<evidence type="ECO:0000305" key="2"/>
<name>RK16_SPIMX</name>
<proteinExistence type="inferred from homology"/>
<protein>
    <recommendedName>
        <fullName evidence="1">Large ribosomal subunit protein uL16c</fullName>
    </recommendedName>
    <alternativeName>
        <fullName evidence="2">50S ribosomal protein L16, chloroplastic</fullName>
    </alternativeName>
</protein>
<accession>O98456</accession>
<gene>
    <name evidence="1" type="primary">rpl16</name>
</gene>
<feature type="chain" id="PRO_0000062313" description="Large ribosomal subunit protein uL16c">
    <location>
        <begin position="1"/>
        <end position="143"/>
    </location>
</feature>
<comment type="subunit">
    <text evidence="1">Part of the 50S ribosomal subunit.</text>
</comment>
<comment type="subcellular location">
    <subcellularLocation>
        <location>Plastid</location>
        <location>Chloroplast</location>
    </subcellularLocation>
</comment>
<comment type="similarity">
    <text evidence="1">Belongs to the universal ribosomal protein uL16 family.</text>
</comment>
<sequence>MLSPRRTKFRKQHRGRMKGVATRGNQIAFGRFALQAMEASWITSRQIEAGRRAMTRYARRGGKLWIKIFPDKPITMRPAETRMGSGKGAPEYWVAVVKPGRILYEMSGISETIARAAMRIAAYKMPIKTRFIVANLSKNPTND</sequence>
<dbReference type="EMBL" id="AF050665">
    <property type="protein sequence ID" value="AAC95312.1"/>
    <property type="molecule type" value="Genomic_DNA"/>
</dbReference>
<dbReference type="RefSeq" id="YP_009258384.1">
    <property type="nucleotide sequence ID" value="NC_030355.1"/>
</dbReference>
<dbReference type="SMR" id="O98456"/>
<dbReference type="GeneID" id="27984732"/>
<dbReference type="GO" id="GO:0009507">
    <property type="term" value="C:chloroplast"/>
    <property type="evidence" value="ECO:0007669"/>
    <property type="project" value="UniProtKB-SubCell"/>
</dbReference>
<dbReference type="GO" id="GO:0005762">
    <property type="term" value="C:mitochondrial large ribosomal subunit"/>
    <property type="evidence" value="ECO:0007669"/>
    <property type="project" value="TreeGrafter"/>
</dbReference>
<dbReference type="GO" id="GO:0019843">
    <property type="term" value="F:rRNA binding"/>
    <property type="evidence" value="ECO:0007669"/>
    <property type="project" value="InterPro"/>
</dbReference>
<dbReference type="GO" id="GO:0003735">
    <property type="term" value="F:structural constituent of ribosome"/>
    <property type="evidence" value="ECO:0007669"/>
    <property type="project" value="InterPro"/>
</dbReference>
<dbReference type="GO" id="GO:0032543">
    <property type="term" value="P:mitochondrial translation"/>
    <property type="evidence" value="ECO:0007669"/>
    <property type="project" value="TreeGrafter"/>
</dbReference>
<dbReference type="CDD" id="cd01433">
    <property type="entry name" value="Ribosomal_L16_L10e"/>
    <property type="match status" value="1"/>
</dbReference>
<dbReference type="FunFam" id="3.90.1170.10:FF:000001">
    <property type="entry name" value="50S ribosomal protein L16"/>
    <property type="match status" value="1"/>
</dbReference>
<dbReference type="Gene3D" id="3.90.1170.10">
    <property type="entry name" value="Ribosomal protein L10e/L16"/>
    <property type="match status" value="1"/>
</dbReference>
<dbReference type="HAMAP" id="MF_01342">
    <property type="entry name" value="Ribosomal_uL16"/>
    <property type="match status" value="1"/>
</dbReference>
<dbReference type="InterPro" id="IPR047873">
    <property type="entry name" value="Ribosomal_uL16"/>
</dbReference>
<dbReference type="InterPro" id="IPR000114">
    <property type="entry name" value="Ribosomal_uL16_bact-type"/>
</dbReference>
<dbReference type="InterPro" id="IPR020798">
    <property type="entry name" value="Ribosomal_uL16_CS"/>
</dbReference>
<dbReference type="InterPro" id="IPR016180">
    <property type="entry name" value="Ribosomal_uL16_dom"/>
</dbReference>
<dbReference type="InterPro" id="IPR036920">
    <property type="entry name" value="Ribosomal_uL16_sf"/>
</dbReference>
<dbReference type="NCBIfam" id="TIGR01164">
    <property type="entry name" value="rplP_bact"/>
    <property type="match status" value="1"/>
</dbReference>
<dbReference type="PANTHER" id="PTHR12220">
    <property type="entry name" value="50S/60S RIBOSOMAL PROTEIN L16"/>
    <property type="match status" value="1"/>
</dbReference>
<dbReference type="PANTHER" id="PTHR12220:SF13">
    <property type="entry name" value="LARGE RIBOSOMAL SUBUNIT PROTEIN UL16M"/>
    <property type="match status" value="1"/>
</dbReference>
<dbReference type="Pfam" id="PF00252">
    <property type="entry name" value="Ribosomal_L16"/>
    <property type="match status" value="1"/>
</dbReference>
<dbReference type="PRINTS" id="PR00060">
    <property type="entry name" value="RIBOSOMALL16"/>
</dbReference>
<dbReference type="SUPFAM" id="SSF54686">
    <property type="entry name" value="Ribosomal protein L16p/L10e"/>
    <property type="match status" value="1"/>
</dbReference>
<dbReference type="PROSITE" id="PS00586">
    <property type="entry name" value="RIBOSOMAL_L16_1"/>
    <property type="match status" value="1"/>
</dbReference>
<dbReference type="PROSITE" id="PS00701">
    <property type="entry name" value="RIBOSOMAL_L16_2"/>
    <property type="match status" value="1"/>
</dbReference>
<keyword id="KW-0150">Chloroplast</keyword>
<keyword id="KW-0934">Plastid</keyword>
<keyword id="KW-0687">Ribonucleoprotein</keyword>
<keyword id="KW-0689">Ribosomal protein</keyword>